<organism>
    <name type="scientific">Mus musculus</name>
    <name type="common">Mouse</name>
    <dbReference type="NCBI Taxonomy" id="10090"/>
    <lineage>
        <taxon>Eukaryota</taxon>
        <taxon>Metazoa</taxon>
        <taxon>Chordata</taxon>
        <taxon>Craniata</taxon>
        <taxon>Vertebrata</taxon>
        <taxon>Euteleostomi</taxon>
        <taxon>Mammalia</taxon>
        <taxon>Eutheria</taxon>
        <taxon>Euarchontoglires</taxon>
        <taxon>Glires</taxon>
        <taxon>Rodentia</taxon>
        <taxon>Myomorpha</taxon>
        <taxon>Muroidea</taxon>
        <taxon>Muridae</taxon>
        <taxon>Murinae</taxon>
        <taxon>Mus</taxon>
        <taxon>Mus</taxon>
    </lineage>
</organism>
<proteinExistence type="evidence at protein level"/>
<accession>P62889</accession>
<accession>P04645</accession>
<name>RL30_MOUSE</name>
<dbReference type="EMBL" id="K02928">
    <property type="protein sequence ID" value="AAA03645.1"/>
    <property type="molecule type" value="Unassigned_DNA"/>
</dbReference>
<dbReference type="EMBL" id="AK002988">
    <property type="protein sequence ID" value="BAB22500.1"/>
    <property type="molecule type" value="mRNA"/>
</dbReference>
<dbReference type="EMBL" id="BC002060">
    <property type="protein sequence ID" value="AAH02060.1"/>
    <property type="molecule type" value="mRNA"/>
</dbReference>
<dbReference type="EMBL" id="BC086890">
    <property type="protein sequence ID" value="AAH86890.1"/>
    <property type="molecule type" value="mRNA"/>
</dbReference>
<dbReference type="CCDS" id="CCDS37057.1"/>
<dbReference type="PIR" id="S11622">
    <property type="entry name" value="R6MS30"/>
</dbReference>
<dbReference type="RefSeq" id="NP_001156957.1">
    <property type="nucleotide sequence ID" value="NM_001163485.2"/>
</dbReference>
<dbReference type="RefSeq" id="NP_033109.1">
    <property type="nucleotide sequence ID" value="NM_009083.5"/>
</dbReference>
<dbReference type="PDB" id="6SWA">
    <property type="method" value="EM"/>
    <property type="resolution" value="3.10 A"/>
    <property type="chains" value="a=1-115"/>
</dbReference>
<dbReference type="PDB" id="7CPU">
    <property type="method" value="EM"/>
    <property type="resolution" value="2.82 A"/>
    <property type="chains" value="Lc=1-115"/>
</dbReference>
<dbReference type="PDB" id="7CPV">
    <property type="method" value="EM"/>
    <property type="resolution" value="3.03 A"/>
    <property type="chains" value="Lc=1-115"/>
</dbReference>
<dbReference type="PDB" id="7LS1">
    <property type="method" value="EM"/>
    <property type="resolution" value="3.30 A"/>
    <property type="chains" value="W2=1-115"/>
</dbReference>
<dbReference type="PDB" id="7LS2">
    <property type="method" value="EM"/>
    <property type="resolution" value="3.10 A"/>
    <property type="chains" value="W2=1-115"/>
</dbReference>
<dbReference type="PDBsum" id="6SWA"/>
<dbReference type="PDBsum" id="7CPU"/>
<dbReference type="PDBsum" id="7CPV"/>
<dbReference type="PDBsum" id="7LS1"/>
<dbReference type="PDBsum" id="7LS2"/>
<dbReference type="EMDB" id="EMD-10321"/>
<dbReference type="EMDB" id="EMD-23500"/>
<dbReference type="EMDB" id="EMD-23501"/>
<dbReference type="EMDB" id="EMD-30432"/>
<dbReference type="EMDB" id="EMD-30433"/>
<dbReference type="SMR" id="P62889"/>
<dbReference type="BioGRID" id="202978">
    <property type="interactions" value="90"/>
</dbReference>
<dbReference type="ComplexPortal" id="CPX-5262">
    <property type="entry name" value="60S cytosolic large ribosomal subunit"/>
</dbReference>
<dbReference type="ComplexPortal" id="CPX-7662">
    <property type="entry name" value="60S cytosolic large ribosomal subunit, testis-specific variant"/>
</dbReference>
<dbReference type="ComplexPortal" id="CPX-7663">
    <property type="entry name" value="60S cytosolic large ribosomal subunit, striated muscle variant"/>
</dbReference>
<dbReference type="FunCoup" id="P62889">
    <property type="interactions" value="2280"/>
</dbReference>
<dbReference type="IntAct" id="P62889">
    <property type="interactions" value="7"/>
</dbReference>
<dbReference type="MINT" id="P62889"/>
<dbReference type="STRING" id="10090.ENSMUSP00000106014"/>
<dbReference type="GlyGen" id="P62889">
    <property type="glycosylation" value="1 site, 1 O-linked glycan (1 site)"/>
</dbReference>
<dbReference type="iPTMnet" id="P62889"/>
<dbReference type="MetOSite" id="P62889"/>
<dbReference type="PhosphoSitePlus" id="P62889"/>
<dbReference type="SwissPalm" id="P62889"/>
<dbReference type="jPOST" id="P62889"/>
<dbReference type="PaxDb" id="10090-ENSMUSP00000106014"/>
<dbReference type="PeptideAtlas" id="P62889"/>
<dbReference type="ProteomicsDB" id="253307"/>
<dbReference type="Pumba" id="P62889"/>
<dbReference type="Antibodypedia" id="1242">
    <property type="antibodies" value="268 antibodies from 31 providers"/>
</dbReference>
<dbReference type="DNASU" id="19946"/>
<dbReference type="Ensembl" id="ENSMUST00000009039.6">
    <property type="protein sequence ID" value="ENSMUSP00000009039.6"/>
    <property type="gene ID" value="ENSMUSG00000058600.14"/>
</dbReference>
<dbReference type="Ensembl" id="ENSMUST00000079735.12">
    <property type="protein sequence ID" value="ENSMUSP00000106014.2"/>
    <property type="gene ID" value="ENSMUSG00000058600.14"/>
</dbReference>
<dbReference type="GeneID" id="19946"/>
<dbReference type="KEGG" id="mmu:19946"/>
<dbReference type="UCSC" id="uc007vlq.2">
    <property type="organism name" value="mouse"/>
</dbReference>
<dbReference type="AGR" id="MGI:98037"/>
<dbReference type="CTD" id="6156"/>
<dbReference type="MGI" id="MGI:98037">
    <property type="gene designation" value="Rpl30"/>
</dbReference>
<dbReference type="VEuPathDB" id="HostDB:ENSMUSG00000058600"/>
<dbReference type="eggNOG" id="KOG2988">
    <property type="taxonomic scope" value="Eukaryota"/>
</dbReference>
<dbReference type="GeneTree" id="ENSGT00390000012138"/>
<dbReference type="HOGENOM" id="CLU_130502_0_1_1"/>
<dbReference type="InParanoid" id="P62889"/>
<dbReference type="OMA" id="YFQGGNN"/>
<dbReference type="OrthoDB" id="9557386at2759"/>
<dbReference type="PhylomeDB" id="P62889"/>
<dbReference type="TreeFam" id="TF300252"/>
<dbReference type="Reactome" id="R-MMU-156827">
    <property type="pathway name" value="L13a-mediated translational silencing of Ceruloplasmin expression"/>
</dbReference>
<dbReference type="Reactome" id="R-MMU-1799339">
    <property type="pathway name" value="SRP-dependent cotranslational protein targeting to membrane"/>
</dbReference>
<dbReference type="Reactome" id="R-MMU-6791226">
    <property type="pathway name" value="Major pathway of rRNA processing in the nucleolus and cytosol"/>
</dbReference>
<dbReference type="Reactome" id="R-MMU-72689">
    <property type="pathway name" value="Formation of a pool of free 40S subunits"/>
</dbReference>
<dbReference type="Reactome" id="R-MMU-72706">
    <property type="pathway name" value="GTP hydrolysis and joining of the 60S ribosomal subunit"/>
</dbReference>
<dbReference type="Reactome" id="R-MMU-975956">
    <property type="pathway name" value="Nonsense Mediated Decay (NMD) independent of the Exon Junction Complex (EJC)"/>
</dbReference>
<dbReference type="Reactome" id="R-MMU-975957">
    <property type="pathway name" value="Nonsense Mediated Decay (NMD) enhanced by the Exon Junction Complex (EJC)"/>
</dbReference>
<dbReference type="BioGRID-ORCS" id="19946">
    <property type="hits" value="20 hits in 63 CRISPR screens"/>
</dbReference>
<dbReference type="CD-CODE" id="CE726F99">
    <property type="entry name" value="Postsynaptic density"/>
</dbReference>
<dbReference type="ChiTaRS" id="Rpl30">
    <property type="organism name" value="mouse"/>
</dbReference>
<dbReference type="PRO" id="PR:P62889"/>
<dbReference type="Proteomes" id="UP000000589">
    <property type="component" value="Chromosome 15"/>
</dbReference>
<dbReference type="RNAct" id="P62889">
    <property type="molecule type" value="protein"/>
</dbReference>
<dbReference type="Bgee" id="ENSMUSG00000058600">
    <property type="expression patterns" value="Expressed in ectoplacental cone and 201 other cell types or tissues"/>
</dbReference>
<dbReference type="ExpressionAtlas" id="P62889">
    <property type="expression patterns" value="baseline and differential"/>
</dbReference>
<dbReference type="GO" id="GO:0005737">
    <property type="term" value="C:cytoplasm"/>
    <property type="evidence" value="ECO:0000314"/>
    <property type="project" value="ComplexPortal"/>
</dbReference>
<dbReference type="GO" id="GO:0005829">
    <property type="term" value="C:cytosol"/>
    <property type="evidence" value="ECO:0000304"/>
    <property type="project" value="Reactome"/>
</dbReference>
<dbReference type="GO" id="GO:0022625">
    <property type="term" value="C:cytosolic large ribosomal subunit"/>
    <property type="evidence" value="ECO:0000314"/>
    <property type="project" value="UniProtKB"/>
</dbReference>
<dbReference type="GO" id="GO:0005634">
    <property type="term" value="C:nucleus"/>
    <property type="evidence" value="ECO:0007669"/>
    <property type="project" value="Ensembl"/>
</dbReference>
<dbReference type="GO" id="GO:0098794">
    <property type="term" value="C:postsynapse"/>
    <property type="evidence" value="ECO:0000303"/>
    <property type="project" value="SynGO"/>
</dbReference>
<dbReference type="GO" id="GO:0014069">
    <property type="term" value="C:postsynaptic density"/>
    <property type="evidence" value="ECO:0000314"/>
    <property type="project" value="SynGO"/>
</dbReference>
<dbReference type="GO" id="GO:0005840">
    <property type="term" value="C:ribosome"/>
    <property type="evidence" value="ECO:0000303"/>
    <property type="project" value="SynGO"/>
</dbReference>
<dbReference type="GO" id="GO:0045202">
    <property type="term" value="C:synapse"/>
    <property type="evidence" value="ECO:0000314"/>
    <property type="project" value="SynGO"/>
</dbReference>
<dbReference type="GO" id="GO:0003723">
    <property type="term" value="F:RNA binding"/>
    <property type="evidence" value="ECO:0007669"/>
    <property type="project" value="InterPro"/>
</dbReference>
<dbReference type="GO" id="GO:0003735">
    <property type="term" value="F:structural constituent of ribosome"/>
    <property type="evidence" value="ECO:0000314"/>
    <property type="project" value="UniProtKB"/>
</dbReference>
<dbReference type="GO" id="GO:0061844">
    <property type="term" value="P:antimicrobial humoral immune response mediated by antimicrobial peptide"/>
    <property type="evidence" value="ECO:0007669"/>
    <property type="project" value="Ensembl"/>
</dbReference>
<dbReference type="GO" id="GO:0002181">
    <property type="term" value="P:cytoplasmic translation"/>
    <property type="evidence" value="ECO:0000303"/>
    <property type="project" value="ComplexPortal"/>
</dbReference>
<dbReference type="GO" id="GO:0050829">
    <property type="term" value="P:defense response to Gram-negative bacterium"/>
    <property type="evidence" value="ECO:0007669"/>
    <property type="project" value="Ensembl"/>
</dbReference>
<dbReference type="GO" id="GO:0031640">
    <property type="term" value="P:killing of cells of another organism"/>
    <property type="evidence" value="ECO:0007669"/>
    <property type="project" value="Ensembl"/>
</dbReference>
<dbReference type="FunFam" id="3.30.1330.30:FF:000001">
    <property type="entry name" value="60S ribosomal protein L30"/>
    <property type="match status" value="1"/>
</dbReference>
<dbReference type="Gene3D" id="3.30.1330.30">
    <property type="match status" value="1"/>
</dbReference>
<dbReference type="HAMAP" id="MF_00481">
    <property type="entry name" value="Ribosomal_eL30"/>
    <property type="match status" value="1"/>
</dbReference>
<dbReference type="InterPro" id="IPR000231">
    <property type="entry name" value="Ribosomal_eL30"/>
</dbReference>
<dbReference type="InterPro" id="IPR039109">
    <property type="entry name" value="Ribosomal_eL30-like"/>
</dbReference>
<dbReference type="InterPro" id="IPR029064">
    <property type="entry name" value="Ribosomal_eL30-like_sf"/>
</dbReference>
<dbReference type="InterPro" id="IPR022991">
    <property type="entry name" value="Ribosomal_eL30_CS"/>
</dbReference>
<dbReference type="InterPro" id="IPR004038">
    <property type="entry name" value="Ribosomal_eL8/eL30/eS12/Gad45"/>
</dbReference>
<dbReference type="NCBIfam" id="NF002172">
    <property type="entry name" value="PRK01018.1"/>
    <property type="match status" value="1"/>
</dbReference>
<dbReference type="PANTHER" id="PTHR11449">
    <property type="entry name" value="RIBOSOMAL PROTEIN L30"/>
    <property type="match status" value="1"/>
</dbReference>
<dbReference type="Pfam" id="PF01248">
    <property type="entry name" value="Ribosomal_L7Ae"/>
    <property type="match status" value="1"/>
</dbReference>
<dbReference type="SUPFAM" id="SSF55315">
    <property type="entry name" value="L30e-like"/>
    <property type="match status" value="1"/>
</dbReference>
<dbReference type="PROSITE" id="PS00709">
    <property type="entry name" value="RIBOSOMAL_L30E_1"/>
    <property type="match status" value="1"/>
</dbReference>
<dbReference type="PROSITE" id="PS00993">
    <property type="entry name" value="RIBOSOMAL_L30E_2"/>
    <property type="match status" value="1"/>
</dbReference>
<feature type="chain" id="PRO_0000146122" description="Large ribosomal subunit protein eL30">
    <location>
        <begin position="1"/>
        <end position="115"/>
    </location>
</feature>
<feature type="modified residue" description="Phosphoserine" evidence="1">
    <location>
        <position position="10"/>
    </location>
</feature>
<feature type="modified residue" description="Phosphoserine" evidence="1">
    <location>
        <position position="16"/>
    </location>
</feature>
<feature type="modified residue" description="N6-acetyllysine; alternate" evidence="1">
    <location>
        <position position="26"/>
    </location>
</feature>
<feature type="cross-link" description="Glycyl lysine isopeptide (Lys-Gly) (interchain with G-Cter in SUMO2); alternate" evidence="1">
    <location>
        <position position="26"/>
    </location>
</feature>
<sequence>MVAAKKTKKSLESINSRLQLVMKSGKYVLGYKQTLKMIRQGKAKLVILANNCPALRKSEIEYYAMLAKTGVHHYSGNNIELGTACGKYYRVCTLAIIDPGDSDIIRSMPEQTGEK</sequence>
<protein>
    <recommendedName>
        <fullName evidence="3">Large ribosomal subunit protein eL30</fullName>
    </recommendedName>
    <alternativeName>
        <fullName>60S ribosomal protein L30</fullName>
    </alternativeName>
</protein>
<comment type="function">
    <text evidence="2">Component of the large ribosomal subunit (PubMed:36517592). The ribosome is a large ribonucleoprotein complex responsible for the synthesis of proteins in the cell (PubMed:36517592).</text>
</comment>
<comment type="subunit">
    <text evidence="2">Component of the large ribosomal subunit.</text>
</comment>
<comment type="subcellular location">
    <subcellularLocation>
        <location evidence="2">Cytoplasm</location>
    </subcellularLocation>
</comment>
<comment type="similarity">
    <text evidence="3">Belongs to the eukaryotic ribosomal protein eL30 family.</text>
</comment>
<evidence type="ECO:0000250" key="1">
    <source>
        <dbReference type="UniProtKB" id="P62888"/>
    </source>
</evidence>
<evidence type="ECO:0000269" key="2">
    <source>
    </source>
</evidence>
<evidence type="ECO:0000305" key="3"/>
<evidence type="ECO:0007744" key="4">
    <source>
        <dbReference type="PDB" id="7CPU"/>
    </source>
</evidence>
<evidence type="ECO:0007744" key="5">
    <source>
        <dbReference type="PDB" id="7CPV"/>
    </source>
</evidence>
<gene>
    <name type="primary">Rpl30</name>
</gene>
<reference key="1">
    <citation type="journal article" date="1984" name="Mol. Cell. Biol.">
        <title>Characterization of the expressed gene and several processed pseudogenes for the mouse ribosomal protein L30 gene family.</title>
        <authorList>
            <person name="Wiedemann L.M."/>
            <person name="Perry R.P."/>
        </authorList>
    </citation>
    <scope>NUCLEOTIDE SEQUENCE</scope>
</reference>
<reference key="2">
    <citation type="journal article" date="2005" name="Science">
        <title>The transcriptional landscape of the mammalian genome.</title>
        <authorList>
            <person name="Carninci P."/>
            <person name="Kasukawa T."/>
            <person name="Katayama S."/>
            <person name="Gough J."/>
            <person name="Frith M.C."/>
            <person name="Maeda N."/>
            <person name="Oyama R."/>
            <person name="Ravasi T."/>
            <person name="Lenhard B."/>
            <person name="Wells C."/>
            <person name="Kodzius R."/>
            <person name="Shimokawa K."/>
            <person name="Bajic V.B."/>
            <person name="Brenner S.E."/>
            <person name="Batalov S."/>
            <person name="Forrest A.R."/>
            <person name="Zavolan M."/>
            <person name="Davis M.J."/>
            <person name="Wilming L.G."/>
            <person name="Aidinis V."/>
            <person name="Allen J.E."/>
            <person name="Ambesi-Impiombato A."/>
            <person name="Apweiler R."/>
            <person name="Aturaliya R.N."/>
            <person name="Bailey T.L."/>
            <person name="Bansal M."/>
            <person name="Baxter L."/>
            <person name="Beisel K.W."/>
            <person name="Bersano T."/>
            <person name="Bono H."/>
            <person name="Chalk A.M."/>
            <person name="Chiu K.P."/>
            <person name="Choudhary V."/>
            <person name="Christoffels A."/>
            <person name="Clutterbuck D.R."/>
            <person name="Crowe M.L."/>
            <person name="Dalla E."/>
            <person name="Dalrymple B.P."/>
            <person name="de Bono B."/>
            <person name="Della Gatta G."/>
            <person name="di Bernardo D."/>
            <person name="Down T."/>
            <person name="Engstrom P."/>
            <person name="Fagiolini M."/>
            <person name="Faulkner G."/>
            <person name="Fletcher C.F."/>
            <person name="Fukushima T."/>
            <person name="Furuno M."/>
            <person name="Futaki S."/>
            <person name="Gariboldi M."/>
            <person name="Georgii-Hemming P."/>
            <person name="Gingeras T.R."/>
            <person name="Gojobori T."/>
            <person name="Green R.E."/>
            <person name="Gustincich S."/>
            <person name="Harbers M."/>
            <person name="Hayashi Y."/>
            <person name="Hensch T.K."/>
            <person name="Hirokawa N."/>
            <person name="Hill D."/>
            <person name="Huminiecki L."/>
            <person name="Iacono M."/>
            <person name="Ikeo K."/>
            <person name="Iwama A."/>
            <person name="Ishikawa T."/>
            <person name="Jakt M."/>
            <person name="Kanapin A."/>
            <person name="Katoh M."/>
            <person name="Kawasawa Y."/>
            <person name="Kelso J."/>
            <person name="Kitamura H."/>
            <person name="Kitano H."/>
            <person name="Kollias G."/>
            <person name="Krishnan S.P."/>
            <person name="Kruger A."/>
            <person name="Kummerfeld S.K."/>
            <person name="Kurochkin I.V."/>
            <person name="Lareau L.F."/>
            <person name="Lazarevic D."/>
            <person name="Lipovich L."/>
            <person name="Liu J."/>
            <person name="Liuni S."/>
            <person name="McWilliam S."/>
            <person name="Madan Babu M."/>
            <person name="Madera M."/>
            <person name="Marchionni L."/>
            <person name="Matsuda H."/>
            <person name="Matsuzawa S."/>
            <person name="Miki H."/>
            <person name="Mignone F."/>
            <person name="Miyake S."/>
            <person name="Morris K."/>
            <person name="Mottagui-Tabar S."/>
            <person name="Mulder N."/>
            <person name="Nakano N."/>
            <person name="Nakauchi H."/>
            <person name="Ng P."/>
            <person name="Nilsson R."/>
            <person name="Nishiguchi S."/>
            <person name="Nishikawa S."/>
            <person name="Nori F."/>
            <person name="Ohara O."/>
            <person name="Okazaki Y."/>
            <person name="Orlando V."/>
            <person name="Pang K.C."/>
            <person name="Pavan W.J."/>
            <person name="Pavesi G."/>
            <person name="Pesole G."/>
            <person name="Petrovsky N."/>
            <person name="Piazza S."/>
            <person name="Reed J."/>
            <person name="Reid J.F."/>
            <person name="Ring B.Z."/>
            <person name="Ringwald M."/>
            <person name="Rost B."/>
            <person name="Ruan Y."/>
            <person name="Salzberg S.L."/>
            <person name="Sandelin A."/>
            <person name="Schneider C."/>
            <person name="Schoenbach C."/>
            <person name="Sekiguchi K."/>
            <person name="Semple C.A."/>
            <person name="Seno S."/>
            <person name="Sessa L."/>
            <person name="Sheng Y."/>
            <person name="Shibata Y."/>
            <person name="Shimada H."/>
            <person name="Shimada K."/>
            <person name="Silva D."/>
            <person name="Sinclair B."/>
            <person name="Sperling S."/>
            <person name="Stupka E."/>
            <person name="Sugiura K."/>
            <person name="Sultana R."/>
            <person name="Takenaka Y."/>
            <person name="Taki K."/>
            <person name="Tammoja K."/>
            <person name="Tan S.L."/>
            <person name="Tang S."/>
            <person name="Taylor M.S."/>
            <person name="Tegner J."/>
            <person name="Teichmann S.A."/>
            <person name="Ueda H.R."/>
            <person name="van Nimwegen E."/>
            <person name="Verardo R."/>
            <person name="Wei C.L."/>
            <person name="Yagi K."/>
            <person name="Yamanishi H."/>
            <person name="Zabarovsky E."/>
            <person name="Zhu S."/>
            <person name="Zimmer A."/>
            <person name="Hide W."/>
            <person name="Bult C."/>
            <person name="Grimmond S.M."/>
            <person name="Teasdale R.D."/>
            <person name="Liu E.T."/>
            <person name="Brusic V."/>
            <person name="Quackenbush J."/>
            <person name="Wahlestedt C."/>
            <person name="Mattick J.S."/>
            <person name="Hume D.A."/>
            <person name="Kai C."/>
            <person name="Sasaki D."/>
            <person name="Tomaru Y."/>
            <person name="Fukuda S."/>
            <person name="Kanamori-Katayama M."/>
            <person name="Suzuki M."/>
            <person name="Aoki J."/>
            <person name="Arakawa T."/>
            <person name="Iida J."/>
            <person name="Imamura K."/>
            <person name="Itoh M."/>
            <person name="Kato T."/>
            <person name="Kawaji H."/>
            <person name="Kawagashira N."/>
            <person name="Kawashima T."/>
            <person name="Kojima M."/>
            <person name="Kondo S."/>
            <person name="Konno H."/>
            <person name="Nakano K."/>
            <person name="Ninomiya N."/>
            <person name="Nishio T."/>
            <person name="Okada M."/>
            <person name="Plessy C."/>
            <person name="Shibata K."/>
            <person name="Shiraki T."/>
            <person name="Suzuki S."/>
            <person name="Tagami M."/>
            <person name="Waki K."/>
            <person name="Watahiki A."/>
            <person name="Okamura-Oho Y."/>
            <person name="Suzuki H."/>
            <person name="Kawai J."/>
            <person name="Hayashizaki Y."/>
        </authorList>
    </citation>
    <scope>NUCLEOTIDE SEQUENCE [LARGE SCALE MRNA]</scope>
    <source>
        <strain>C57BL/6J</strain>
        <tissue>Brain</tissue>
    </source>
</reference>
<reference key="3">
    <citation type="journal article" date="2004" name="Genome Res.">
        <title>The status, quality, and expansion of the NIH full-length cDNA project: the Mammalian Gene Collection (MGC).</title>
        <authorList>
            <consortium name="The MGC Project Team"/>
        </authorList>
    </citation>
    <scope>NUCLEOTIDE SEQUENCE [LARGE SCALE MRNA]</scope>
    <source>
        <strain>FVB/N</strain>
        <tissue>Kidney</tissue>
        <tissue>Mammary tumor</tissue>
    </source>
</reference>
<reference key="4">
    <citation type="journal article" date="2010" name="Cell">
        <title>A tissue-specific atlas of mouse protein phosphorylation and expression.</title>
        <authorList>
            <person name="Huttlin E.L."/>
            <person name="Jedrychowski M.P."/>
            <person name="Elias J.E."/>
            <person name="Goswami T."/>
            <person name="Rad R."/>
            <person name="Beausoleil S.A."/>
            <person name="Villen J."/>
            <person name="Haas W."/>
            <person name="Sowa M.E."/>
            <person name="Gygi S.P."/>
        </authorList>
    </citation>
    <scope>IDENTIFICATION BY MASS SPECTROMETRY [LARGE SCALE ANALYSIS]</scope>
    <source>
        <tissue>Brain</tissue>
        <tissue>Brown adipose tissue</tissue>
        <tissue>Heart</tissue>
        <tissue>Kidney</tissue>
        <tissue>Liver</tissue>
        <tissue>Lung</tissue>
        <tissue>Pancreas</tissue>
        <tissue>Spleen</tissue>
        <tissue>Testis</tissue>
    </source>
</reference>
<reference evidence="4 5" key="5">
    <citation type="journal article" date="2022" name="Nature">
        <title>A male germ-cell-specific ribosome controls male fertility.</title>
        <authorList>
            <person name="Li H."/>
            <person name="Huo Y."/>
            <person name="He X."/>
            <person name="Yao L."/>
            <person name="Zhang H."/>
            <person name="Cui Y."/>
            <person name="Xiao H."/>
            <person name="Xie W."/>
            <person name="Zhang D."/>
            <person name="Wang Y."/>
            <person name="Zhang S."/>
            <person name="Tu H."/>
            <person name="Cheng Y."/>
            <person name="Guo Y."/>
            <person name="Cao X."/>
            <person name="Zhu Y."/>
            <person name="Jiang T."/>
            <person name="Guo X."/>
            <person name="Qin Y."/>
            <person name="Sha J."/>
        </authorList>
    </citation>
    <scope>STRUCTURE BY ELECTRON MICROSCOPY (3.03 ANGSTROMS) OF RIBOSOME</scope>
    <scope>FUNCTION</scope>
    <scope>SUBUNIT</scope>
    <scope>SUBCELLULAR LOCATION</scope>
</reference>
<keyword id="KW-0002">3D-structure</keyword>
<keyword id="KW-0007">Acetylation</keyword>
<keyword id="KW-0963">Cytoplasm</keyword>
<keyword id="KW-1017">Isopeptide bond</keyword>
<keyword id="KW-0597">Phosphoprotein</keyword>
<keyword id="KW-1185">Reference proteome</keyword>
<keyword id="KW-0687">Ribonucleoprotein</keyword>
<keyword id="KW-0689">Ribosomal protein</keyword>
<keyword id="KW-0832">Ubl conjugation</keyword>